<sequence length="401" mass="44710">MQVSIACTEHNLKSRNGEDRLLSKQSSTAPNVVNAARAKFRTVAIIARSLGTFTPQHHISLKESTAKQTGMKYRNLGKSGLRVSCLGLGTWVTFGGQISDEVAERLMTIAYESGVNLFDTAEVYAAGKAEVILGSIIKKKGWRRSSLVITTKLYWGGKAETERGLSRKHIIEGLKGSLQRLQLEYVDVVFANRPDSNTPMEEIVRAMTHVINQGMAMYWGTSRWSAMEIMEAYSVARQFNMIPPVCEQAEYHLFQREKVEVQLPELYHKIGVGAMTWSPLACGIISGKYGNGVPESSRASLKCYQWLKERIVSEEGRKQQNKLKDLSPIAERLGCTLPQLAVAWCLRNEGVSSVLLGSSTPEQLIENLGAIQVLPKMTSHVVNEIDNILRNKPYSKKDYRS</sequence>
<protein>
    <recommendedName>
        <fullName>Voltage-gated potassium channel subunit beta-1</fullName>
        <ecNumber evidence="8">1.1.1.-</ecNumber>
    </recommendedName>
    <alternativeName>
        <fullName>K(+) channel subunit beta-1</fullName>
    </alternativeName>
    <alternativeName>
        <fullName>Kv-beta-1</fullName>
    </alternativeName>
</protein>
<organism>
    <name type="scientific">Rattus norvegicus</name>
    <name type="common">Rat</name>
    <dbReference type="NCBI Taxonomy" id="10116"/>
    <lineage>
        <taxon>Eukaryota</taxon>
        <taxon>Metazoa</taxon>
        <taxon>Chordata</taxon>
        <taxon>Craniata</taxon>
        <taxon>Vertebrata</taxon>
        <taxon>Euteleostomi</taxon>
        <taxon>Mammalia</taxon>
        <taxon>Eutheria</taxon>
        <taxon>Euarchontoglires</taxon>
        <taxon>Glires</taxon>
        <taxon>Rodentia</taxon>
        <taxon>Myomorpha</taxon>
        <taxon>Muroidea</taxon>
        <taxon>Muridae</taxon>
        <taxon>Murinae</taxon>
        <taxon>Rattus</taxon>
    </lineage>
</organism>
<feature type="chain" id="PRO_0000148743" description="Voltage-gated potassium channel subunit beta-1">
    <location>
        <begin position="1"/>
        <end position="401"/>
    </location>
</feature>
<feature type="active site" description="Proton donor/acceptor" evidence="1">
    <location>
        <position position="124"/>
    </location>
</feature>
<feature type="binding site" evidence="1">
    <location>
        <position position="90"/>
    </location>
    <ligand>
        <name>NADP(+)</name>
        <dbReference type="ChEBI" id="CHEBI:58349"/>
    </ligand>
</feature>
<feature type="binding site" evidence="1">
    <location>
        <position position="91"/>
    </location>
    <ligand>
        <name>NADP(+)</name>
        <dbReference type="ChEBI" id="CHEBI:58349"/>
    </ligand>
</feature>
<feature type="binding site" evidence="1">
    <location>
        <position position="97"/>
    </location>
    <ligand>
        <name>NADP(+)</name>
        <dbReference type="ChEBI" id="CHEBI:58349"/>
    </ligand>
</feature>
<feature type="binding site" evidence="1">
    <location>
        <position position="119"/>
    </location>
    <ligand>
        <name>NADP(+)</name>
        <dbReference type="ChEBI" id="CHEBI:58349"/>
    </ligand>
</feature>
<feature type="binding site" evidence="1">
    <location>
        <position position="192"/>
    </location>
    <ligand>
        <name>NADP(+)</name>
        <dbReference type="ChEBI" id="CHEBI:58349"/>
    </ligand>
</feature>
<feature type="binding site" evidence="1">
    <location>
        <position position="222"/>
    </location>
    <ligand>
        <name>NADP(+)</name>
        <dbReference type="ChEBI" id="CHEBI:58349"/>
    </ligand>
</feature>
<feature type="binding site" evidence="1">
    <location>
        <position position="223"/>
    </location>
    <ligand>
        <name>NADP(+)</name>
        <dbReference type="ChEBI" id="CHEBI:58349"/>
    </ligand>
</feature>
<feature type="binding site" evidence="1">
    <location>
        <position position="248"/>
    </location>
    <ligand>
        <name>NADP(+)</name>
        <dbReference type="ChEBI" id="CHEBI:58349"/>
    </ligand>
</feature>
<feature type="binding site" evidence="1">
    <location>
        <position position="277"/>
    </location>
    <ligand>
        <name>NADP(+)</name>
        <dbReference type="ChEBI" id="CHEBI:58349"/>
    </ligand>
</feature>
<feature type="binding site" evidence="1">
    <location>
        <position position="278"/>
    </location>
    <ligand>
        <name>NADP(+)</name>
        <dbReference type="ChEBI" id="CHEBI:58349"/>
    </ligand>
</feature>
<feature type="binding site" evidence="1">
    <location>
        <position position="279"/>
    </location>
    <ligand>
        <name>NADP(+)</name>
        <dbReference type="ChEBI" id="CHEBI:58349"/>
    </ligand>
</feature>
<feature type="binding site" evidence="1">
    <location>
        <position position="280"/>
    </location>
    <ligand>
        <name>NADP(+)</name>
        <dbReference type="ChEBI" id="CHEBI:58349"/>
    </ligand>
</feature>
<feature type="binding site" evidence="1">
    <location>
        <position position="281"/>
    </location>
    <ligand>
        <name>NADP(+)</name>
        <dbReference type="ChEBI" id="CHEBI:58349"/>
    </ligand>
</feature>
<feature type="binding site" evidence="1">
    <location>
        <position position="282"/>
    </location>
    <ligand>
        <name>NADP(+)</name>
        <dbReference type="ChEBI" id="CHEBI:58349"/>
    </ligand>
</feature>
<feature type="binding site" evidence="1">
    <location>
        <position position="288"/>
    </location>
    <ligand>
        <name>NADP(+)</name>
        <dbReference type="ChEBI" id="CHEBI:58349"/>
    </ligand>
</feature>
<feature type="binding site" evidence="1">
    <location>
        <position position="298"/>
    </location>
    <ligand>
        <name>NADP(+)</name>
        <dbReference type="ChEBI" id="CHEBI:58349"/>
    </ligand>
</feature>
<feature type="binding site" evidence="1">
    <location>
        <position position="357"/>
    </location>
    <ligand>
        <name>NADP(+)</name>
        <dbReference type="ChEBI" id="CHEBI:58349"/>
    </ligand>
</feature>
<feature type="binding site" evidence="1">
    <location>
        <position position="359"/>
    </location>
    <ligand>
        <name>NADP(+)</name>
        <dbReference type="ChEBI" id="CHEBI:58349"/>
    </ligand>
</feature>
<feature type="binding site" evidence="1">
    <location>
        <position position="363"/>
    </location>
    <ligand>
        <name>NADP(+)</name>
        <dbReference type="ChEBI" id="CHEBI:58349"/>
    </ligand>
</feature>
<feature type="binding site" evidence="1">
    <location>
        <position position="366"/>
    </location>
    <ligand>
        <name>NADP(+)</name>
        <dbReference type="ChEBI" id="CHEBI:58349"/>
    </ligand>
</feature>
<feature type="binding site" evidence="1">
    <location>
        <position position="367"/>
    </location>
    <ligand>
        <name>NADP(+)</name>
        <dbReference type="ChEBI" id="CHEBI:58349"/>
    </ligand>
</feature>
<feature type="mutagenesis site" description="Loss of enzyme activity." evidence="8">
    <original>K</original>
    <variation>M</variation>
    <location>
        <position position="152"/>
    </location>
</feature>
<dbReference type="EC" id="1.1.1.-" evidence="8"/>
<dbReference type="EMBL" id="X70662">
    <property type="protein sequence ID" value="CAA50000.1"/>
    <property type="molecule type" value="mRNA"/>
</dbReference>
<dbReference type="EMBL" id="BC089219">
    <property type="protein sequence ID" value="AAH89219.1"/>
    <property type="molecule type" value="mRNA"/>
</dbReference>
<dbReference type="RefSeq" id="NP_058999.1">
    <property type="nucleotide sequence ID" value="NM_017303.3"/>
</dbReference>
<dbReference type="SMR" id="P63144"/>
<dbReference type="BioGRID" id="248349">
    <property type="interactions" value="2"/>
</dbReference>
<dbReference type="CORUM" id="P63144"/>
<dbReference type="FunCoup" id="P63144">
    <property type="interactions" value="731"/>
</dbReference>
<dbReference type="IntAct" id="P63144">
    <property type="interactions" value="1"/>
</dbReference>
<dbReference type="MINT" id="P63144"/>
<dbReference type="STRING" id="10116.ENSRNOP00000072289"/>
<dbReference type="TCDB" id="8.A.5.1.3">
    <property type="family name" value="the voltage-gated k(+) channel Beta-subunit (kvBeta) family"/>
</dbReference>
<dbReference type="PhosphoSitePlus" id="P63144"/>
<dbReference type="PaxDb" id="10116-ENSRNOP00000051084"/>
<dbReference type="ABCD" id="P63144">
    <property type="antibodies" value="3 sequenced antibodies"/>
</dbReference>
<dbReference type="Ensembl" id="ENSRNOT00000077973.2">
    <property type="protein sequence ID" value="ENSRNOP00000072289.1"/>
    <property type="gene ID" value="ENSRNOG00000056697.2"/>
</dbReference>
<dbReference type="GeneID" id="29737"/>
<dbReference type="KEGG" id="rno:29737"/>
<dbReference type="UCSC" id="RGD:61827">
    <property type="organism name" value="rat"/>
</dbReference>
<dbReference type="AGR" id="RGD:61827"/>
<dbReference type="CTD" id="7881"/>
<dbReference type="RGD" id="61827">
    <property type="gene designation" value="Kcnab1"/>
</dbReference>
<dbReference type="eggNOG" id="KOG1575">
    <property type="taxonomic scope" value="Eukaryota"/>
</dbReference>
<dbReference type="GeneTree" id="ENSGT00940000156760"/>
<dbReference type="HOGENOM" id="CLU_023205_2_0_1"/>
<dbReference type="InParanoid" id="P63144"/>
<dbReference type="OMA" id="MWAGPYG"/>
<dbReference type="OrthoDB" id="1720422at2759"/>
<dbReference type="PhylomeDB" id="P63144"/>
<dbReference type="TreeFam" id="TF324563"/>
<dbReference type="Reactome" id="R-RNO-1296072">
    <property type="pathway name" value="Voltage gated Potassium channels"/>
</dbReference>
<dbReference type="PRO" id="PR:P63144"/>
<dbReference type="Proteomes" id="UP000002494">
    <property type="component" value="Chromosome 2"/>
</dbReference>
<dbReference type="Bgee" id="ENSRNOG00000056697">
    <property type="expression patterns" value="Expressed in cerebellum and 18 other cell types or tissues"/>
</dbReference>
<dbReference type="GO" id="GO:0030424">
    <property type="term" value="C:axon"/>
    <property type="evidence" value="ECO:0000314"/>
    <property type="project" value="RGD"/>
</dbReference>
<dbReference type="GO" id="GO:0009898">
    <property type="term" value="C:cytoplasmic side of plasma membrane"/>
    <property type="evidence" value="ECO:0000250"/>
    <property type="project" value="UniProtKB"/>
</dbReference>
<dbReference type="GO" id="GO:0005829">
    <property type="term" value="C:cytosol"/>
    <property type="evidence" value="ECO:0000250"/>
    <property type="project" value="UniProtKB"/>
</dbReference>
<dbReference type="GO" id="GO:0032839">
    <property type="term" value="C:dendrite cytoplasm"/>
    <property type="evidence" value="ECO:0000314"/>
    <property type="project" value="RGD"/>
</dbReference>
<dbReference type="GO" id="GO:0044224">
    <property type="term" value="C:juxtaparanode region of axon"/>
    <property type="evidence" value="ECO:0000314"/>
    <property type="project" value="RGD"/>
</dbReference>
<dbReference type="GO" id="GO:0043025">
    <property type="term" value="C:neuronal cell body"/>
    <property type="evidence" value="ECO:0000314"/>
    <property type="project" value="RGD"/>
</dbReference>
<dbReference type="GO" id="GO:0043204">
    <property type="term" value="C:perikaryon"/>
    <property type="evidence" value="ECO:0000314"/>
    <property type="project" value="RGD"/>
</dbReference>
<dbReference type="GO" id="GO:0034705">
    <property type="term" value="C:potassium channel complex"/>
    <property type="evidence" value="ECO:0000314"/>
    <property type="project" value="UniProtKB"/>
</dbReference>
<dbReference type="GO" id="GO:1990635">
    <property type="term" value="C:proximal dendrite"/>
    <property type="evidence" value="ECO:0000314"/>
    <property type="project" value="RGD"/>
</dbReference>
<dbReference type="GO" id="GO:0008076">
    <property type="term" value="C:voltage-gated potassium channel complex"/>
    <property type="evidence" value="ECO:0000314"/>
    <property type="project" value="RGD"/>
</dbReference>
<dbReference type="GO" id="GO:0004033">
    <property type="term" value="F:aldo-keto reductase (NADPH) activity"/>
    <property type="evidence" value="ECO:0000314"/>
    <property type="project" value="UniProtKB"/>
</dbReference>
<dbReference type="GO" id="GO:0004090">
    <property type="term" value="F:carbonyl reductase (NADPH) activity"/>
    <property type="evidence" value="ECO:0007669"/>
    <property type="project" value="RHEA"/>
</dbReference>
<dbReference type="GO" id="GO:0140678">
    <property type="term" value="F:molecular function inhibitor activity"/>
    <property type="evidence" value="ECO:0000266"/>
    <property type="project" value="RGD"/>
</dbReference>
<dbReference type="GO" id="GO:0070402">
    <property type="term" value="F:NADPH binding"/>
    <property type="evidence" value="ECO:0000250"/>
    <property type="project" value="UniProtKB"/>
</dbReference>
<dbReference type="GO" id="GO:0015459">
    <property type="term" value="F:potassium channel regulator activity"/>
    <property type="evidence" value="ECO:0000314"/>
    <property type="project" value="UniProtKB"/>
</dbReference>
<dbReference type="GO" id="GO:0019904">
    <property type="term" value="F:protein domain specific binding"/>
    <property type="evidence" value="ECO:0000266"/>
    <property type="project" value="RGD"/>
</dbReference>
<dbReference type="GO" id="GO:0044325">
    <property type="term" value="F:transmembrane transporter binding"/>
    <property type="evidence" value="ECO:0000353"/>
    <property type="project" value="RGD"/>
</dbReference>
<dbReference type="GO" id="GO:0005249">
    <property type="term" value="F:voltage-gated potassium channel activity"/>
    <property type="evidence" value="ECO:0007669"/>
    <property type="project" value="InterPro"/>
</dbReference>
<dbReference type="GO" id="GO:0060539">
    <property type="term" value="P:diaphragm development"/>
    <property type="evidence" value="ECO:0000270"/>
    <property type="project" value="RGD"/>
</dbReference>
<dbReference type="GO" id="GO:0007507">
    <property type="term" value="P:heart development"/>
    <property type="evidence" value="ECO:0000270"/>
    <property type="project" value="RGD"/>
</dbReference>
<dbReference type="GO" id="GO:0007611">
    <property type="term" value="P:learning or memory"/>
    <property type="evidence" value="ECO:0000266"/>
    <property type="project" value="RGD"/>
</dbReference>
<dbReference type="GO" id="GO:0045445">
    <property type="term" value="P:myoblast differentiation"/>
    <property type="evidence" value="ECO:0000270"/>
    <property type="project" value="RGD"/>
</dbReference>
<dbReference type="GO" id="GO:1902259">
    <property type="term" value="P:regulation of delayed rectifier potassium channel activity"/>
    <property type="evidence" value="ECO:0000314"/>
    <property type="project" value="UniProtKB"/>
</dbReference>
<dbReference type="GO" id="GO:1901379">
    <property type="term" value="P:regulation of potassium ion transmembrane transport"/>
    <property type="evidence" value="ECO:0000266"/>
    <property type="project" value="RGD"/>
</dbReference>
<dbReference type="GO" id="GO:0007519">
    <property type="term" value="P:skeletal muscle tissue development"/>
    <property type="evidence" value="ECO:0000270"/>
    <property type="project" value="RGD"/>
</dbReference>
<dbReference type="CDD" id="cd19159">
    <property type="entry name" value="AKR_KCAB1B_AKR6A3-like"/>
    <property type="match status" value="1"/>
</dbReference>
<dbReference type="FunFam" id="3.20.20.100:FF:000001">
    <property type="entry name" value="voltage-gated potassium channel subunit beta-2 isoform X2"/>
    <property type="match status" value="1"/>
</dbReference>
<dbReference type="Gene3D" id="3.20.20.100">
    <property type="entry name" value="NADP-dependent oxidoreductase domain"/>
    <property type="match status" value="1"/>
</dbReference>
<dbReference type="InterPro" id="IPR005983">
    <property type="entry name" value="K_chnl_volt-dep_bsu_KCNAB"/>
</dbReference>
<dbReference type="InterPro" id="IPR005399">
    <property type="entry name" value="K_chnl_volt-dep_bsu_KCNAB-rel"/>
</dbReference>
<dbReference type="InterPro" id="IPR005400">
    <property type="entry name" value="K_chnl_volt-dep_bsu_KCNAB1"/>
</dbReference>
<dbReference type="InterPro" id="IPR023210">
    <property type="entry name" value="NADP_OxRdtase_dom"/>
</dbReference>
<dbReference type="InterPro" id="IPR036812">
    <property type="entry name" value="NADP_OxRdtase_dom_sf"/>
</dbReference>
<dbReference type="NCBIfam" id="TIGR01293">
    <property type="entry name" value="Kv_beta"/>
    <property type="match status" value="1"/>
</dbReference>
<dbReference type="PANTHER" id="PTHR43150">
    <property type="entry name" value="HYPERKINETIC, ISOFORM M"/>
    <property type="match status" value="1"/>
</dbReference>
<dbReference type="PANTHER" id="PTHR43150:SF7">
    <property type="entry name" value="VOLTAGE-GATED POTASSIUM CHANNEL SUBUNIT BETA-1"/>
    <property type="match status" value="1"/>
</dbReference>
<dbReference type="Pfam" id="PF00248">
    <property type="entry name" value="Aldo_ket_red"/>
    <property type="match status" value="1"/>
</dbReference>
<dbReference type="PRINTS" id="PR01578">
    <property type="entry name" value="KCNAB1CHANEL"/>
</dbReference>
<dbReference type="PRINTS" id="PR01577">
    <property type="entry name" value="KCNABCHANNEL"/>
</dbReference>
<dbReference type="SUPFAM" id="SSF51430">
    <property type="entry name" value="NAD(P)-linked oxidoreductase"/>
    <property type="match status" value="1"/>
</dbReference>
<name>KCAB1_RAT</name>
<evidence type="ECO:0000250" key="1">
    <source>
        <dbReference type="UniProtKB" id="P62483"/>
    </source>
</evidence>
<evidence type="ECO:0000250" key="2">
    <source>
        <dbReference type="UniProtKB" id="Q14722"/>
    </source>
</evidence>
<evidence type="ECO:0000269" key="3">
    <source>
    </source>
</evidence>
<evidence type="ECO:0000269" key="4">
    <source>
    </source>
</evidence>
<evidence type="ECO:0000269" key="5">
    <source>
    </source>
</evidence>
<evidence type="ECO:0000269" key="6">
    <source>
    </source>
</evidence>
<evidence type="ECO:0000269" key="7">
    <source>
    </source>
</evidence>
<evidence type="ECO:0000269" key="8">
    <source>
    </source>
</evidence>
<evidence type="ECO:0000269" key="9">
    <source>
    </source>
</evidence>
<evidence type="ECO:0000269" key="10">
    <source>
    </source>
</evidence>
<evidence type="ECO:0000269" key="11">
    <source>
    </source>
</evidence>
<evidence type="ECO:0000305" key="12"/>
<evidence type="ECO:0000305" key="13">
    <source>
    </source>
</evidence>
<evidence type="ECO:0000312" key="14">
    <source>
        <dbReference type="RGD" id="61827"/>
    </source>
</evidence>
<gene>
    <name evidence="14" type="primary">Kcnab1</name>
    <name type="synonym">Kvb1</name>
</gene>
<comment type="function">
    <text evidence="2 3 5 6 7 8 9 10">Regulatory subunit of the voltage-gated potassium (Kv) channels composed of pore-forming and potassium-conducting alpha subunits and of regulatory beta subunits (By similarity). The beta-1/KCNAB1 cytoplasmic subunit mediates closure of delayed rectifier potassium channels by physically obstructing the pore via its N-terminal domain and increases the speed of channel closure for other family members (PubMed:10650996, PubMed:15618540, PubMed:16504945, PubMed:18222921, PubMed:8183366). Promotes the inactivation of KCNA1, KCNA2, KCNA4, KCNA5 and KCNA6 alpha subunit-containing channels (PubMed:10064591, PubMed:10650996, PubMed:15618540, PubMed:16504945, PubMed:8183366). Displays nicotinamide adenine dinucleotide phosphate (NADPH)-dependent aldoketoreductase activity by catalyzing the NADPH-dependent reduction of a variety of endogenous aldehydes and ketones (PubMed:18222921). The binding of NADPH is required for efficient down-regulation of potassium channel activity (PubMed:18222921). Oxidation of the bound NADPH restrains N-terminal domain from blocking the channel, thereby decreasing N-type inactivation of potassium channel activity (PubMed:18222921, PubMed:21436029).</text>
</comment>
<comment type="catalytic activity">
    <reaction evidence="8">
        <text>a primary alcohol + NADP(+) = an aldehyde + NADPH + H(+)</text>
        <dbReference type="Rhea" id="RHEA:15937"/>
        <dbReference type="ChEBI" id="CHEBI:15378"/>
        <dbReference type="ChEBI" id="CHEBI:15734"/>
        <dbReference type="ChEBI" id="CHEBI:17478"/>
        <dbReference type="ChEBI" id="CHEBI:57783"/>
        <dbReference type="ChEBI" id="CHEBI:58349"/>
    </reaction>
    <physiologicalReaction direction="right-to-left" evidence="13">
        <dbReference type="Rhea" id="RHEA:15939"/>
    </physiologicalReaction>
</comment>
<comment type="catalytic activity">
    <reaction evidence="8">
        <text>a secondary alcohol + NADP(+) = a ketone + NADPH + H(+)</text>
        <dbReference type="Rhea" id="RHEA:19257"/>
        <dbReference type="ChEBI" id="CHEBI:15378"/>
        <dbReference type="ChEBI" id="CHEBI:17087"/>
        <dbReference type="ChEBI" id="CHEBI:35681"/>
        <dbReference type="ChEBI" id="CHEBI:57783"/>
        <dbReference type="ChEBI" id="CHEBI:58349"/>
    </reaction>
    <physiologicalReaction direction="right-to-left" evidence="13">
        <dbReference type="Rhea" id="RHEA:19259"/>
    </physiologicalReaction>
</comment>
<comment type="subunit">
    <text evidence="3 4 7 8 11 12">Homotetramer (PubMed:18222921). Interaction with tetrameric potassium channel alpha subunits gives rise to a heterooctamer (Probable). Identified in potassium channel complexes containing KCNA1, KCNA2, KCNA4, KCNA5, KCNA6, KCNAB1 and KCNAB2 (PubMed:10064591, PubMed:16504945, PubMed:9334400). Part of a complex containing KCNA1, KCNA4 and LGI1; interaction with LGI1 inhibits down-regulation of KCNA1 channel activity (PubMed:16504945). Interacts with the dimer formed by GNB1 and GNG2; this enhances KCNA1 binding (PubMed:10064591). Interacts with SQSTM1 (PubMed:10477520).</text>
</comment>
<comment type="subcellular location">
    <subcellularLocation>
        <location evidence="2">Cytoplasm</location>
    </subcellularLocation>
    <subcellularLocation>
        <location evidence="6">Membrane</location>
        <topology evidence="12">Peripheral membrane protein</topology>
        <orientation evidence="12">Cytoplasmic side</orientation>
    </subcellularLocation>
    <subcellularLocation>
        <location evidence="7">Cell membrane</location>
        <topology evidence="12">Peripheral membrane protein</topology>
        <orientation evidence="12">Cytoplasmic side</orientation>
    </subcellularLocation>
    <text evidence="2">Recruited to the cytoplasmic side of the cell membrane via its interaction with pore-forming potassium channel alpha subunits.</text>
</comment>
<comment type="tissue specificity">
    <text evidence="6 10 11">Detected in brain (PubMed:9334400). Detected in hippocampus, in the middle third of the molecular layer of the dentate gyrus and in the mossy fiber zone of the CA3 region (PubMed:9334400). Detected in globus pallidus and pars reticulata of the substantia nigra (at protein level) (PubMed:9334400). Specifically expressed in the nervous system (PubMed:8183366). Detected in mesenteric arteries (PubMed:15618540).</text>
</comment>
<comment type="domain">
    <text evidence="8 9 10">The N-terminal domain of the beta subunit mediates closure of delayed rectifier potassium channels by physically obstructing the pore.</text>
</comment>
<comment type="similarity">
    <text evidence="12">Belongs to the shaker potassium channel beta subunit family.</text>
</comment>
<accession>P63144</accession>
<accession>P97380</accession>
<accession>Q5FWS9</accession>
<accession>Q61763</accession>
<accession>Q63277</accession>
<keyword id="KW-1003">Cell membrane</keyword>
<keyword id="KW-0963">Cytoplasm</keyword>
<keyword id="KW-0406">Ion transport</keyword>
<keyword id="KW-0472">Membrane</keyword>
<keyword id="KW-0521">NADP</keyword>
<keyword id="KW-0560">Oxidoreductase</keyword>
<keyword id="KW-0630">Potassium</keyword>
<keyword id="KW-0633">Potassium transport</keyword>
<keyword id="KW-1185">Reference proteome</keyword>
<keyword id="KW-0813">Transport</keyword>
<proteinExistence type="evidence at protein level"/>
<reference key="1">
    <citation type="journal article" date="1994" name="Nature">
        <title>Inactivation properties of voltage-gated K+ channels altered by presence of beta-subunit.</title>
        <authorList>
            <person name="Rettig J."/>
            <person name="Heinemann S.H."/>
            <person name="Wunder F."/>
            <person name="Lorra C."/>
            <person name="Parcej D.N."/>
            <person name="Dolly J.O."/>
            <person name="Pongs O."/>
        </authorList>
    </citation>
    <scope>NUCLEOTIDE SEQUENCE [MRNA]</scope>
    <scope>FUNCTION</scope>
    <scope>TISSUE SPECIFICITY</scope>
    <scope>DOMAIN</scope>
    <source>
        <tissue>Brain cortex</tissue>
    </source>
</reference>
<reference key="2">
    <citation type="journal article" date="2004" name="Genome Res.">
        <title>The status, quality, and expansion of the NIH full-length cDNA project: the Mammalian Gene Collection (MGC).</title>
        <authorList>
            <consortium name="The MGC Project Team"/>
        </authorList>
    </citation>
    <scope>NUCLEOTIDE SEQUENCE [LARGE SCALE MRNA]</scope>
    <source>
        <tissue>Brain</tissue>
    </source>
</reference>
<reference key="3">
    <citation type="journal article" date="1997" name="J. Neurosci.">
        <title>Association and colocalization of the Kvbeta1 and Kvbeta2 beta-subunits with Kv1 alpha-subunits in mammalian brain K+ channel complexes.</title>
        <authorList>
            <person name="Rhodes K.J."/>
            <person name="Strassle B.W."/>
            <person name="Monaghan M.M."/>
            <person name="Bekele-Arcuri Z."/>
            <person name="Matos M.F."/>
            <person name="Trimmer J.S."/>
        </authorList>
    </citation>
    <scope>INTERACTION WITH KCNA1; KCNA2; KCNA4; KCNA6 AND KCNAB2</scope>
    <scope>SUBUNIT</scope>
    <scope>TISSUE SPECIFICITY</scope>
    <scope>SUBCELLULAR LOCATION</scope>
</reference>
<reference key="4">
    <citation type="journal article" date="1999" name="EMBO J.">
        <title>Fast inactivation of a brain K+ channel composed of Kv1.1 and Kvbeta1.1 subunits modulated by G protein beta gamma subunits.</title>
        <authorList>
            <person name="Jing J."/>
            <person name="Chikvashvili D."/>
            <person name="Singer-Lahat D."/>
            <person name="Thornhill W.B."/>
            <person name="Reuveny E."/>
            <person name="Lotan I."/>
        </authorList>
    </citation>
    <scope>FUNCTION</scope>
    <scope>SUBUNIT</scope>
    <scope>INTERACTION WITH KCNA1; GNB1 AND GNG2</scope>
</reference>
<reference key="5">
    <citation type="journal article" date="1999" name="Pflugers Arch.">
        <title>Modal behavior of the Kv1.1 channel conferred by the Kvbeta1.1 subunit and its regulation by dephosphorylation of Kv1.1.</title>
        <authorList>
            <person name="Singer-Lahat D."/>
            <person name="Dascal N."/>
            <person name="Lotan I."/>
        </authorList>
    </citation>
    <scope>FUNCTION</scope>
    <scope>SUBUNIT</scope>
</reference>
<reference key="6">
    <citation type="journal article" date="1999" name="Science">
        <title>Differential stimulation of PKC phosphorylation of potassium channels by ZIP1 and ZIP2.</title>
        <authorList>
            <person name="Gong J."/>
            <person name="Xu J."/>
            <person name="Bezanilla M."/>
            <person name="van Huizen R."/>
            <person name="Derin R."/>
            <person name="Li M."/>
        </authorList>
    </citation>
    <scope>INTERACTION WITH SQSTM1</scope>
</reference>
<reference key="7">
    <citation type="journal article" date="2005" name="Circ. Res.">
        <title>Heteromultimeric Kv1 channels contribute to myogenic control of arterial diameter.</title>
        <authorList>
            <person name="Plane F."/>
            <person name="Johnson R."/>
            <person name="Kerr P."/>
            <person name="Wiehler W."/>
            <person name="Thorneloe K."/>
            <person name="Ishii K."/>
            <person name="Chen T."/>
            <person name="Cole W."/>
        </authorList>
    </citation>
    <scope>FUNCTION</scope>
    <scope>SUBCELLULAR LOCATION</scope>
    <scope>SUBUNIT</scope>
    <scope>TISSUE SPECIFICITY</scope>
</reference>
<reference key="8">
    <citation type="journal article" date="2006" name="Neuron">
        <title>The epilepsy-linked Lgi1 protein assembles into presynaptic Kv1 channels and inhibits inactivation by Kvbeta1.</title>
        <authorList>
            <person name="Schulte U."/>
            <person name="Thumfart J.-O."/>
            <person name="Kloecker N."/>
            <person name="Sailer C.A."/>
            <person name="Bildl W."/>
            <person name="Biniossek M."/>
            <person name="Dehn D."/>
            <person name="Deller T."/>
            <person name="Eble S."/>
            <person name="Abbass K."/>
            <person name="Wangler T."/>
            <person name="Knaus H.-G."/>
            <person name="Fakler B."/>
        </authorList>
    </citation>
    <scope>FUNCTION</scope>
    <scope>INTERACTION WITH LGI1; KCNA1 AND KCNA4</scope>
    <scope>SUBCELLULAR LOCATION</scope>
    <scope>SUBUNIT</scope>
    <scope>IDENTIFICATION BY MASS SPECTROMETRY</scope>
</reference>
<reference key="9">
    <citation type="journal article" date="2008" name="J. Biol. Chem.">
        <title>Functional coupling between the Kv1.1 channel and aldoketoreductase Kvbeta1.</title>
        <authorList>
            <person name="Pan Y."/>
            <person name="Weng J."/>
            <person name="Cao Y."/>
            <person name="Bhosle R.C."/>
            <person name="Zhou M."/>
        </authorList>
    </citation>
    <scope>FUNCTION</scope>
    <scope>CATALYTIC ACTIVITY</scope>
    <scope>SUBUNIT</scope>
    <scope>DOMAIN</scope>
    <scope>MUTAGENESIS OF LYS-152</scope>
</reference>
<reference key="10">
    <citation type="journal article" date="2009" name="Channels">
        <title>The molecular basis for the actions of Kvbeta1.2 on the opening and closing of the Kv1.2 delayed rectifier channel.</title>
        <authorList>
            <person name="Peters C.J."/>
            <person name="Vaid M."/>
            <person name="Horne A.J."/>
            <person name="Fedida D."/>
            <person name="Accili E.A."/>
        </authorList>
    </citation>
    <scope>INTERACTION WITH KCNA2</scope>
</reference>
<reference key="11">
    <citation type="journal article" date="2011" name="Proc. Natl. Acad. Sci. U.S.A.">
        <title>Oxidation of NADPH on Kvbeta1 inhibits ball-and-chain type inactivation by restraining the chain.</title>
        <authorList>
            <person name="Pan Y."/>
            <person name="Weng J."/>
            <person name="Levin E.J."/>
            <person name="Zhou M."/>
        </authorList>
    </citation>
    <scope>FUNCTION</scope>
    <scope>DOMAIN</scope>
</reference>